<organism>
    <name type="scientific">Sulfurisphaera tokodaii (strain DSM 16993 / JCM 10545 / NBRC 100140 / 7)</name>
    <name type="common">Sulfolobus tokodaii</name>
    <dbReference type="NCBI Taxonomy" id="273063"/>
    <lineage>
        <taxon>Archaea</taxon>
        <taxon>Thermoproteota</taxon>
        <taxon>Thermoprotei</taxon>
        <taxon>Sulfolobales</taxon>
        <taxon>Sulfolobaceae</taxon>
        <taxon>Sulfurisphaera</taxon>
    </lineage>
</organism>
<comment type="function">
    <text evidence="1">This is one of the proteins that bind and probably mediate the attachment of the 5S RNA into the large ribosomal subunit, where it forms part of the central protuberance. In the 70S ribosome it contacts protein S13 of the 30S subunit (bridge B1b), connecting the 2 subunits; this bridge is implicated in subunit movement. May contact the P site tRNA; the 5S rRNA and some of its associated proteins might help stabilize positioning of ribosome-bound tRNAs.</text>
</comment>
<comment type="subunit">
    <text evidence="1">Part of the 50S ribosomal subunit; contacts the 5S rRNA and probably tRNA. Forms a bridge to the 30S subunit in the 70S ribosome.</text>
</comment>
<comment type="similarity">
    <text evidence="1">Belongs to the universal ribosomal protein uL5 family.</text>
</comment>
<dbReference type="EMBL" id="BA000023">
    <property type="protein sequence ID" value="BAK54272.1"/>
    <property type="molecule type" value="Genomic_DNA"/>
</dbReference>
<dbReference type="SMR" id="Q975J3"/>
<dbReference type="STRING" id="273063.STK_04200"/>
<dbReference type="KEGG" id="sto:STK_04200"/>
<dbReference type="PATRIC" id="fig|273063.9.peg.487"/>
<dbReference type="eggNOG" id="arCOG04092">
    <property type="taxonomic scope" value="Archaea"/>
</dbReference>
<dbReference type="OrthoDB" id="372044at2157"/>
<dbReference type="Proteomes" id="UP000001015">
    <property type="component" value="Chromosome"/>
</dbReference>
<dbReference type="GO" id="GO:1990904">
    <property type="term" value="C:ribonucleoprotein complex"/>
    <property type="evidence" value="ECO:0007669"/>
    <property type="project" value="UniProtKB-KW"/>
</dbReference>
<dbReference type="GO" id="GO:0005840">
    <property type="term" value="C:ribosome"/>
    <property type="evidence" value="ECO:0007669"/>
    <property type="project" value="UniProtKB-KW"/>
</dbReference>
<dbReference type="GO" id="GO:0019843">
    <property type="term" value="F:rRNA binding"/>
    <property type="evidence" value="ECO:0007669"/>
    <property type="project" value="UniProtKB-UniRule"/>
</dbReference>
<dbReference type="GO" id="GO:0003735">
    <property type="term" value="F:structural constituent of ribosome"/>
    <property type="evidence" value="ECO:0007669"/>
    <property type="project" value="InterPro"/>
</dbReference>
<dbReference type="GO" id="GO:0000049">
    <property type="term" value="F:tRNA binding"/>
    <property type="evidence" value="ECO:0007669"/>
    <property type="project" value="UniProtKB-UniRule"/>
</dbReference>
<dbReference type="GO" id="GO:0006412">
    <property type="term" value="P:translation"/>
    <property type="evidence" value="ECO:0007669"/>
    <property type="project" value="UniProtKB-UniRule"/>
</dbReference>
<dbReference type="FunFam" id="3.30.1440.10:FF:000002">
    <property type="entry name" value="60S ribosomal protein L11"/>
    <property type="match status" value="1"/>
</dbReference>
<dbReference type="Gene3D" id="3.30.1440.10">
    <property type="match status" value="1"/>
</dbReference>
<dbReference type="HAMAP" id="MF_01333_A">
    <property type="entry name" value="Ribosomal_uL5_A"/>
    <property type="match status" value="1"/>
</dbReference>
<dbReference type="InterPro" id="IPR002132">
    <property type="entry name" value="Ribosomal_uL5"/>
</dbReference>
<dbReference type="InterPro" id="IPR022804">
    <property type="entry name" value="Ribosomal_uL5_arc"/>
</dbReference>
<dbReference type="InterPro" id="IPR031309">
    <property type="entry name" value="Ribosomal_uL5_C"/>
</dbReference>
<dbReference type="InterPro" id="IPR020929">
    <property type="entry name" value="Ribosomal_uL5_CS"/>
</dbReference>
<dbReference type="InterPro" id="IPR022803">
    <property type="entry name" value="Ribosomal_uL5_dom_sf"/>
</dbReference>
<dbReference type="InterPro" id="IPR031310">
    <property type="entry name" value="Ribosomal_uL5_N"/>
</dbReference>
<dbReference type="NCBIfam" id="NF003258">
    <property type="entry name" value="PRK04219.1"/>
    <property type="match status" value="1"/>
</dbReference>
<dbReference type="PANTHER" id="PTHR11994">
    <property type="entry name" value="60S RIBOSOMAL PROTEIN L11-RELATED"/>
    <property type="match status" value="1"/>
</dbReference>
<dbReference type="Pfam" id="PF00281">
    <property type="entry name" value="Ribosomal_L5"/>
    <property type="match status" value="1"/>
</dbReference>
<dbReference type="Pfam" id="PF00673">
    <property type="entry name" value="Ribosomal_L5_C"/>
    <property type="match status" value="1"/>
</dbReference>
<dbReference type="PIRSF" id="PIRSF002161">
    <property type="entry name" value="Ribosomal_L5"/>
    <property type="match status" value="1"/>
</dbReference>
<dbReference type="SUPFAM" id="SSF55282">
    <property type="entry name" value="RL5-like"/>
    <property type="match status" value="1"/>
</dbReference>
<dbReference type="PROSITE" id="PS00358">
    <property type="entry name" value="RIBOSOMAL_L5"/>
    <property type="match status" value="1"/>
</dbReference>
<accession>Q975J3</accession>
<accession>F9VMX5</accession>
<protein>
    <recommendedName>
        <fullName evidence="1">Large ribosomal subunit protein uL5</fullName>
    </recommendedName>
    <alternativeName>
        <fullName evidence="2">50S ribosomal protein L5</fullName>
    </alternativeName>
</protein>
<sequence length="177" mass="19882">MAETQTVNPMRKLRLEKVTVNIGVGEAGERLQKAYQLLQELTGVKPVYTIAKRTIREFGVRKGAPIGVKVTLRGKKAEEFLNKVLAAVGHRIKASSFDEYGNVSFGIAEHVLIPGTRYDPEIGIFGMDVAITLVRPGFRVARRRRKKAHIPKRHRTVSKEEAMEFLKQNFNVTIVEG</sequence>
<reference key="1">
    <citation type="journal article" date="2001" name="DNA Res.">
        <title>Complete genome sequence of an aerobic thermoacidophilic Crenarchaeon, Sulfolobus tokodaii strain7.</title>
        <authorList>
            <person name="Kawarabayasi Y."/>
            <person name="Hino Y."/>
            <person name="Horikawa H."/>
            <person name="Jin-no K."/>
            <person name="Takahashi M."/>
            <person name="Sekine M."/>
            <person name="Baba S."/>
            <person name="Ankai A."/>
            <person name="Kosugi H."/>
            <person name="Hosoyama A."/>
            <person name="Fukui S."/>
            <person name="Nagai Y."/>
            <person name="Nishijima K."/>
            <person name="Otsuka R."/>
            <person name="Nakazawa H."/>
            <person name="Takamiya M."/>
            <person name="Kato Y."/>
            <person name="Yoshizawa T."/>
            <person name="Tanaka T."/>
            <person name="Kudoh Y."/>
            <person name="Yamazaki J."/>
            <person name="Kushida N."/>
            <person name="Oguchi A."/>
            <person name="Aoki K."/>
            <person name="Masuda S."/>
            <person name="Yanagii M."/>
            <person name="Nishimura M."/>
            <person name="Yamagishi A."/>
            <person name="Oshima T."/>
            <person name="Kikuchi H."/>
        </authorList>
    </citation>
    <scope>NUCLEOTIDE SEQUENCE [LARGE SCALE GENOMIC DNA]</scope>
    <source>
        <strain>DSM 16993 / JCM 10545 / NBRC 100140 / 7</strain>
    </source>
</reference>
<keyword id="KW-1185">Reference proteome</keyword>
<keyword id="KW-0687">Ribonucleoprotein</keyword>
<keyword id="KW-0689">Ribosomal protein</keyword>
<keyword id="KW-0694">RNA-binding</keyword>
<keyword id="KW-0699">rRNA-binding</keyword>
<keyword id="KW-0820">tRNA-binding</keyword>
<name>RL5_SULTO</name>
<evidence type="ECO:0000255" key="1">
    <source>
        <dbReference type="HAMAP-Rule" id="MF_01333"/>
    </source>
</evidence>
<evidence type="ECO:0000305" key="2"/>
<feature type="chain" id="PRO_0000125070" description="Large ribosomal subunit protein uL5">
    <location>
        <begin position="1"/>
        <end position="177"/>
    </location>
</feature>
<proteinExistence type="inferred from homology"/>
<gene>
    <name evidence="1" type="primary">rpl5</name>
    <name type="ordered locus">STK_04200</name>
</gene>